<protein>
    <recommendedName>
        <fullName evidence="2">Elongation factor Tu</fullName>
        <shortName evidence="2">EF-Tu</shortName>
        <ecNumber evidence="2">3.6.5.3</ecNumber>
    </recommendedName>
</protein>
<keyword id="KW-0963">Cytoplasm</keyword>
<keyword id="KW-0251">Elongation factor</keyword>
<keyword id="KW-0342">GTP-binding</keyword>
<keyword id="KW-0378">Hydrolase</keyword>
<keyword id="KW-0460">Magnesium</keyword>
<keyword id="KW-0479">Metal-binding</keyword>
<keyword id="KW-0547">Nucleotide-binding</keyword>
<keyword id="KW-0648">Protein biosynthesis</keyword>
<keyword id="KW-1185">Reference proteome</keyword>
<feature type="chain" id="PRO_1000076111" description="Elongation factor Tu">
    <location>
        <begin position="1"/>
        <end position="394"/>
    </location>
</feature>
<feature type="domain" description="tr-type G">
    <location>
        <begin position="10"/>
        <end position="204"/>
    </location>
</feature>
<feature type="region of interest" description="G1" evidence="1">
    <location>
        <begin position="19"/>
        <end position="26"/>
    </location>
</feature>
<feature type="region of interest" description="G2" evidence="1">
    <location>
        <begin position="60"/>
        <end position="64"/>
    </location>
</feature>
<feature type="region of interest" description="G3" evidence="1">
    <location>
        <begin position="81"/>
        <end position="84"/>
    </location>
</feature>
<feature type="region of interest" description="G4" evidence="1">
    <location>
        <begin position="136"/>
        <end position="139"/>
    </location>
</feature>
<feature type="region of interest" description="G5" evidence="1">
    <location>
        <begin position="174"/>
        <end position="176"/>
    </location>
</feature>
<feature type="binding site" evidence="2">
    <location>
        <begin position="19"/>
        <end position="26"/>
    </location>
    <ligand>
        <name>GTP</name>
        <dbReference type="ChEBI" id="CHEBI:37565"/>
    </ligand>
</feature>
<feature type="binding site" evidence="2">
    <location>
        <position position="26"/>
    </location>
    <ligand>
        <name>Mg(2+)</name>
        <dbReference type="ChEBI" id="CHEBI:18420"/>
    </ligand>
</feature>
<feature type="binding site" evidence="2">
    <location>
        <begin position="81"/>
        <end position="85"/>
    </location>
    <ligand>
        <name>GTP</name>
        <dbReference type="ChEBI" id="CHEBI:37565"/>
    </ligand>
</feature>
<feature type="binding site" evidence="2">
    <location>
        <begin position="136"/>
        <end position="139"/>
    </location>
    <ligand>
        <name>GTP</name>
        <dbReference type="ChEBI" id="CHEBI:37565"/>
    </ligand>
</feature>
<comment type="function">
    <text evidence="2">GTP hydrolase that promotes the GTP-dependent binding of aminoacyl-tRNA to the A-site of ribosomes during protein biosynthesis.</text>
</comment>
<comment type="catalytic activity">
    <reaction evidence="2">
        <text>GTP + H2O = GDP + phosphate + H(+)</text>
        <dbReference type="Rhea" id="RHEA:19669"/>
        <dbReference type="ChEBI" id="CHEBI:15377"/>
        <dbReference type="ChEBI" id="CHEBI:15378"/>
        <dbReference type="ChEBI" id="CHEBI:37565"/>
        <dbReference type="ChEBI" id="CHEBI:43474"/>
        <dbReference type="ChEBI" id="CHEBI:58189"/>
        <dbReference type="EC" id="3.6.5.3"/>
    </reaction>
    <physiologicalReaction direction="left-to-right" evidence="2">
        <dbReference type="Rhea" id="RHEA:19670"/>
    </physiologicalReaction>
</comment>
<comment type="subunit">
    <text evidence="2">Monomer.</text>
</comment>
<comment type="subcellular location">
    <subcellularLocation>
        <location evidence="2">Cytoplasm</location>
    </subcellularLocation>
</comment>
<comment type="similarity">
    <text evidence="2">Belongs to the TRAFAC class translation factor GTPase superfamily. Classic translation factor GTPase family. EF-Tu/EF-1A subfamily.</text>
</comment>
<reference key="1">
    <citation type="submission" date="2007-08" db="EMBL/GenBank/DDBJ databases">
        <title>Complete sequence of Shewanella sediminis HAW-EB3.</title>
        <authorList>
            <consortium name="US DOE Joint Genome Institute"/>
            <person name="Copeland A."/>
            <person name="Lucas S."/>
            <person name="Lapidus A."/>
            <person name="Barry K."/>
            <person name="Glavina del Rio T."/>
            <person name="Dalin E."/>
            <person name="Tice H."/>
            <person name="Pitluck S."/>
            <person name="Chertkov O."/>
            <person name="Brettin T."/>
            <person name="Bruce D."/>
            <person name="Detter J.C."/>
            <person name="Han C."/>
            <person name="Schmutz J."/>
            <person name="Larimer F."/>
            <person name="Land M."/>
            <person name="Hauser L."/>
            <person name="Kyrpides N."/>
            <person name="Kim E."/>
            <person name="Zhao J.-S."/>
            <person name="Richardson P."/>
        </authorList>
    </citation>
    <scope>NUCLEOTIDE SEQUENCE [LARGE SCALE GENOMIC DNA]</scope>
    <source>
        <strain>HAW-EB3</strain>
    </source>
</reference>
<sequence>MAKEKFERNKPHVNVGTIGHVDHGKTTLTAAISSVLTKTYGGEVKDFAQIDNAPEERERGITINTSHIEYDTPSRHYAHVDCPGHADYVKNMITGAAQMDGAILVVASTDGPMPQTREHILLSRQVGVPFIIVFMNKCDMVDDEELLELVEMEVRELLSEYDFPGDDLPVIQGSALKALEGEPEWEAKILELAEALDTYIPEPERAIDGAFILPIEDVFSISGRGTVVTGRVERGIIKVGEEVEIVGIKDTTKTTCTGVEMFRKLLDEGRAGENCGVLLRGTKREDVERGQVLAAPGSITPHTTFKSEIYVLSKEEGGRHTPFFKGYRPQFYFRTTDVTGTIELPEGVEMVMPGDNVAMTVTLICPIAMDEGLRFAIREGGRTVGAGVVAEIVA</sequence>
<accession>A8G1F0</accession>
<dbReference type="EC" id="3.6.5.3" evidence="2"/>
<dbReference type="EMBL" id="CP000821">
    <property type="protein sequence ID" value="ABV38923.1"/>
    <property type="molecule type" value="Genomic_DNA"/>
</dbReference>
<dbReference type="RefSeq" id="WP_012144650.1">
    <property type="nucleotide sequence ID" value="NC_009831.1"/>
</dbReference>
<dbReference type="SMR" id="A8G1F0"/>
<dbReference type="STRING" id="425104.Ssed_4319"/>
<dbReference type="KEGG" id="sse:Ssed_4319"/>
<dbReference type="eggNOG" id="COG0050">
    <property type="taxonomic scope" value="Bacteria"/>
</dbReference>
<dbReference type="HOGENOM" id="CLU_007265_0_2_6"/>
<dbReference type="OrthoDB" id="9803139at2"/>
<dbReference type="Proteomes" id="UP000002015">
    <property type="component" value="Chromosome"/>
</dbReference>
<dbReference type="GO" id="GO:0005829">
    <property type="term" value="C:cytosol"/>
    <property type="evidence" value="ECO:0007669"/>
    <property type="project" value="TreeGrafter"/>
</dbReference>
<dbReference type="GO" id="GO:0005525">
    <property type="term" value="F:GTP binding"/>
    <property type="evidence" value="ECO:0007669"/>
    <property type="project" value="UniProtKB-UniRule"/>
</dbReference>
<dbReference type="GO" id="GO:0003924">
    <property type="term" value="F:GTPase activity"/>
    <property type="evidence" value="ECO:0007669"/>
    <property type="project" value="InterPro"/>
</dbReference>
<dbReference type="GO" id="GO:0097216">
    <property type="term" value="F:guanosine tetraphosphate binding"/>
    <property type="evidence" value="ECO:0007669"/>
    <property type="project" value="UniProtKB-ARBA"/>
</dbReference>
<dbReference type="GO" id="GO:0003746">
    <property type="term" value="F:translation elongation factor activity"/>
    <property type="evidence" value="ECO:0007669"/>
    <property type="project" value="UniProtKB-UniRule"/>
</dbReference>
<dbReference type="CDD" id="cd01884">
    <property type="entry name" value="EF_Tu"/>
    <property type="match status" value="1"/>
</dbReference>
<dbReference type="CDD" id="cd03697">
    <property type="entry name" value="EFTU_II"/>
    <property type="match status" value="1"/>
</dbReference>
<dbReference type="CDD" id="cd03707">
    <property type="entry name" value="EFTU_III"/>
    <property type="match status" value="1"/>
</dbReference>
<dbReference type="FunFam" id="2.40.30.10:FF:000001">
    <property type="entry name" value="Elongation factor Tu"/>
    <property type="match status" value="1"/>
</dbReference>
<dbReference type="FunFam" id="3.40.50.300:FF:000003">
    <property type="entry name" value="Elongation factor Tu"/>
    <property type="match status" value="1"/>
</dbReference>
<dbReference type="Gene3D" id="3.40.50.300">
    <property type="entry name" value="P-loop containing nucleotide triphosphate hydrolases"/>
    <property type="match status" value="1"/>
</dbReference>
<dbReference type="Gene3D" id="2.40.30.10">
    <property type="entry name" value="Translation factors"/>
    <property type="match status" value="2"/>
</dbReference>
<dbReference type="HAMAP" id="MF_00118_B">
    <property type="entry name" value="EF_Tu_B"/>
    <property type="match status" value="1"/>
</dbReference>
<dbReference type="InterPro" id="IPR041709">
    <property type="entry name" value="EF-Tu_GTP-bd"/>
</dbReference>
<dbReference type="InterPro" id="IPR050055">
    <property type="entry name" value="EF-Tu_GTPase"/>
</dbReference>
<dbReference type="InterPro" id="IPR004161">
    <property type="entry name" value="EFTu-like_2"/>
</dbReference>
<dbReference type="InterPro" id="IPR033720">
    <property type="entry name" value="EFTU_2"/>
</dbReference>
<dbReference type="InterPro" id="IPR031157">
    <property type="entry name" value="G_TR_CS"/>
</dbReference>
<dbReference type="InterPro" id="IPR027417">
    <property type="entry name" value="P-loop_NTPase"/>
</dbReference>
<dbReference type="InterPro" id="IPR005225">
    <property type="entry name" value="Small_GTP-bd"/>
</dbReference>
<dbReference type="InterPro" id="IPR000795">
    <property type="entry name" value="T_Tr_GTP-bd_dom"/>
</dbReference>
<dbReference type="InterPro" id="IPR009000">
    <property type="entry name" value="Transl_B-barrel_sf"/>
</dbReference>
<dbReference type="InterPro" id="IPR009001">
    <property type="entry name" value="Transl_elong_EF1A/Init_IF2_C"/>
</dbReference>
<dbReference type="InterPro" id="IPR004541">
    <property type="entry name" value="Transl_elong_EFTu/EF1A_bac/org"/>
</dbReference>
<dbReference type="InterPro" id="IPR004160">
    <property type="entry name" value="Transl_elong_EFTu/EF1A_C"/>
</dbReference>
<dbReference type="NCBIfam" id="TIGR00485">
    <property type="entry name" value="EF-Tu"/>
    <property type="match status" value="1"/>
</dbReference>
<dbReference type="NCBIfam" id="NF000766">
    <property type="entry name" value="PRK00049.1"/>
    <property type="match status" value="1"/>
</dbReference>
<dbReference type="NCBIfam" id="NF009372">
    <property type="entry name" value="PRK12735.1"/>
    <property type="match status" value="1"/>
</dbReference>
<dbReference type="NCBIfam" id="NF009373">
    <property type="entry name" value="PRK12736.1"/>
    <property type="match status" value="1"/>
</dbReference>
<dbReference type="NCBIfam" id="TIGR00231">
    <property type="entry name" value="small_GTP"/>
    <property type="match status" value="1"/>
</dbReference>
<dbReference type="PANTHER" id="PTHR43721:SF22">
    <property type="entry name" value="ELONGATION FACTOR TU, MITOCHONDRIAL"/>
    <property type="match status" value="1"/>
</dbReference>
<dbReference type="PANTHER" id="PTHR43721">
    <property type="entry name" value="ELONGATION FACTOR TU-RELATED"/>
    <property type="match status" value="1"/>
</dbReference>
<dbReference type="Pfam" id="PF00009">
    <property type="entry name" value="GTP_EFTU"/>
    <property type="match status" value="1"/>
</dbReference>
<dbReference type="Pfam" id="PF03144">
    <property type="entry name" value="GTP_EFTU_D2"/>
    <property type="match status" value="1"/>
</dbReference>
<dbReference type="Pfam" id="PF03143">
    <property type="entry name" value="GTP_EFTU_D3"/>
    <property type="match status" value="1"/>
</dbReference>
<dbReference type="PRINTS" id="PR00315">
    <property type="entry name" value="ELONGATNFCT"/>
</dbReference>
<dbReference type="SUPFAM" id="SSF50465">
    <property type="entry name" value="EF-Tu/eEF-1alpha/eIF2-gamma C-terminal domain"/>
    <property type="match status" value="1"/>
</dbReference>
<dbReference type="SUPFAM" id="SSF52540">
    <property type="entry name" value="P-loop containing nucleoside triphosphate hydrolases"/>
    <property type="match status" value="1"/>
</dbReference>
<dbReference type="SUPFAM" id="SSF50447">
    <property type="entry name" value="Translation proteins"/>
    <property type="match status" value="1"/>
</dbReference>
<dbReference type="PROSITE" id="PS00301">
    <property type="entry name" value="G_TR_1"/>
    <property type="match status" value="1"/>
</dbReference>
<dbReference type="PROSITE" id="PS51722">
    <property type="entry name" value="G_TR_2"/>
    <property type="match status" value="1"/>
</dbReference>
<name>EFTU_SHESH</name>
<evidence type="ECO:0000250" key="1"/>
<evidence type="ECO:0000255" key="2">
    <source>
        <dbReference type="HAMAP-Rule" id="MF_00118"/>
    </source>
</evidence>
<organism>
    <name type="scientific">Shewanella sediminis (strain HAW-EB3)</name>
    <dbReference type="NCBI Taxonomy" id="425104"/>
    <lineage>
        <taxon>Bacteria</taxon>
        <taxon>Pseudomonadati</taxon>
        <taxon>Pseudomonadota</taxon>
        <taxon>Gammaproteobacteria</taxon>
        <taxon>Alteromonadales</taxon>
        <taxon>Shewanellaceae</taxon>
        <taxon>Shewanella</taxon>
    </lineage>
</organism>
<gene>
    <name evidence="2" type="primary">tuf</name>
    <name type="ordered locus">Ssed_4319</name>
</gene>
<proteinExistence type="inferred from homology"/>